<name>TSAC_COMTE</name>
<keyword id="KW-0002">3D-structure</keyword>
<keyword id="KW-0058">Aromatic hydrocarbons catabolism</keyword>
<keyword id="KW-0903">Direct protein sequencing</keyword>
<keyword id="KW-0520">NAD</keyword>
<keyword id="KW-0560">Oxidoreductase</keyword>
<keyword id="KW-0614">Plasmid</keyword>
<dbReference type="EC" id="1.2.1.62"/>
<dbReference type="EMBL" id="AH010657">
    <property type="protein sequence ID" value="AAC44807.1"/>
    <property type="molecule type" value="Genomic_DNA"/>
</dbReference>
<dbReference type="EMBL" id="AH010657">
    <property type="protein sequence ID" value="AAK37998.1"/>
    <property type="molecule type" value="Genomic_DNA"/>
</dbReference>
<dbReference type="PDB" id="8SY8">
    <property type="method" value="X-ray"/>
    <property type="resolution" value="2.18 A"/>
    <property type="chains" value="A/B=1-252"/>
</dbReference>
<dbReference type="PDBsum" id="8SY8"/>
<dbReference type="SMR" id="P94681"/>
<dbReference type="KEGG" id="ag:AAC44807"/>
<dbReference type="OrthoDB" id="6496917at2759"/>
<dbReference type="BioCyc" id="MetaCyc:TSACCOTE-MONOMER"/>
<dbReference type="GO" id="GO:0018482">
    <property type="term" value="F:4-formylbenzenesulfonate dehydrogenase activity"/>
    <property type="evidence" value="ECO:0007669"/>
    <property type="project" value="UniProtKB-EC"/>
</dbReference>
<dbReference type="GO" id="GO:0009056">
    <property type="term" value="P:catabolic process"/>
    <property type="evidence" value="ECO:0007669"/>
    <property type="project" value="UniProtKB-KW"/>
</dbReference>
<dbReference type="FunFam" id="3.40.50.720:FF:000084">
    <property type="entry name" value="Short-chain dehydrogenase reductase"/>
    <property type="match status" value="1"/>
</dbReference>
<dbReference type="Gene3D" id="3.40.50.720">
    <property type="entry name" value="NAD(P)-binding Rossmann-like Domain"/>
    <property type="match status" value="1"/>
</dbReference>
<dbReference type="InterPro" id="IPR036291">
    <property type="entry name" value="NAD(P)-bd_dom_sf"/>
</dbReference>
<dbReference type="InterPro" id="IPR020904">
    <property type="entry name" value="Sc_DH/Rdtase_CS"/>
</dbReference>
<dbReference type="InterPro" id="IPR002347">
    <property type="entry name" value="SDR_fam"/>
</dbReference>
<dbReference type="NCBIfam" id="NF005559">
    <property type="entry name" value="PRK07231.1"/>
    <property type="match status" value="1"/>
</dbReference>
<dbReference type="PANTHER" id="PTHR43639">
    <property type="entry name" value="OXIDOREDUCTASE, SHORT-CHAIN DEHYDROGENASE/REDUCTASE FAMILY (AFU_ORTHOLOGUE AFUA_5G02870)"/>
    <property type="match status" value="1"/>
</dbReference>
<dbReference type="PANTHER" id="PTHR43639:SF1">
    <property type="entry name" value="SHORT-CHAIN DEHYDROGENASE_REDUCTASE FAMILY PROTEIN"/>
    <property type="match status" value="1"/>
</dbReference>
<dbReference type="Pfam" id="PF13561">
    <property type="entry name" value="adh_short_C2"/>
    <property type="match status" value="1"/>
</dbReference>
<dbReference type="PRINTS" id="PR00081">
    <property type="entry name" value="GDHRDH"/>
</dbReference>
<dbReference type="PRINTS" id="PR00080">
    <property type="entry name" value="SDRFAMILY"/>
</dbReference>
<dbReference type="SUPFAM" id="SSF51735">
    <property type="entry name" value="NAD(P)-binding Rossmann-fold domains"/>
    <property type="match status" value="1"/>
</dbReference>
<dbReference type="PROSITE" id="PS00061">
    <property type="entry name" value="ADH_SHORT"/>
    <property type="match status" value="1"/>
</dbReference>
<geneLocation type="plasmid">
    <name>pTSA</name>
</geneLocation>
<organism>
    <name type="scientific">Comamonas testosteroni</name>
    <name type="common">Pseudomonas testosteroni</name>
    <dbReference type="NCBI Taxonomy" id="285"/>
    <lineage>
        <taxon>Bacteria</taxon>
        <taxon>Pseudomonadati</taxon>
        <taxon>Pseudomonadota</taxon>
        <taxon>Betaproteobacteria</taxon>
        <taxon>Burkholderiales</taxon>
        <taxon>Comamonadaceae</taxon>
        <taxon>Comamonas</taxon>
    </lineage>
</organism>
<sequence length="252" mass="26438">MNLNKQVAIVTGGASGFGAAIARRLSQAGAAVLVADLNAEGAQRMATELNAAGGRALGMACDVSKEADYRAVVDAAIAQLGGLHIVVNNAGTTHRNKPALAVTEDEFDRVYRVNLKSVYWSAQCALPHFAQQGHGVMVNVASTTGVRPGPGLTWYSGSKAAMINLTKGLALEFARSGVRINAVNPMIGETPMMADFMGMEDTPANRERFLSRIPLGRFTRPDDVASAVAFLASDDASFLTGVCLDVDGGRNI</sequence>
<gene>
    <name type="primary">tsaC1</name>
    <name type="synonym">tsaC</name>
</gene>
<gene>
    <name type="primary">tsaC2</name>
</gene>
<reference key="1">
    <citation type="journal article" date="1997" name="J. Bacteriol.">
        <title>Characterization of the p-toluenesulfonate operon tsaMBCD and tsaR in Comamonas testosteroni T-2.</title>
        <authorList>
            <person name="Junker F."/>
            <person name="Kiewitz R."/>
            <person name="Cook A.M."/>
        </authorList>
    </citation>
    <scope>NUCLEOTIDE SEQUENCE [GENOMIC DNA]</scope>
    <scope>PROTEIN SEQUENCE OF 1-10</scope>
    <scope>SUBUNIT</scope>
    <source>
        <strain>DSM 6577 / T-2</strain>
        <plasmid>pTSA</plasmid>
    </source>
</reference>
<reference key="2">
    <citation type="journal article" date="2001" name="Appl. Environ. Microbiol.">
        <title>Map of the IncP1beta plasmid pTSA encoding the widespread genes (tsa) for p-toluenesulfonate degradation in Comamonas testosteroni T-2.</title>
        <authorList>
            <person name="Tralau T."/>
            <person name="Cook A.M."/>
            <person name="Ruff J."/>
        </authorList>
    </citation>
    <scope>NUCLEOTIDE SEQUENCE [GENOMIC DNA]</scope>
    <source>
        <strain>DSM 6577 / T-2</strain>
        <plasmid>pTSA</plasmid>
    </source>
</reference>
<reference key="3">
    <citation type="journal article" date="2004" name="Biochem. J.">
        <title>A novel outer-membrane anion channel (porin) as part of a putatively two-component transport system for 4-toluenesulphonate in Comamonas testosteroni T-2.</title>
        <authorList>
            <person name="Mampel J."/>
            <person name="Maier E."/>
            <person name="Tralau T."/>
            <person name="Ruff J."/>
            <person name="Benz R."/>
            <person name="Cook A.M."/>
        </authorList>
    </citation>
    <scope>NUCLEOTIDE SEQUENCE [GENOMIC DNA]</scope>
    <source>
        <strain>DSM 6577 / T-2</strain>
        <plasmid>pTSA</plasmid>
    </source>
</reference>
<reference key="4">
    <citation type="journal article" date="1991" name="J. Gen. Microbiol.">
        <title>Degradation of p-toluic acid (p-toluenecarboxylic acid) and p-toluenesulphonic acid via oxygenation of the methyl sidechain is initiated by the same set of enzymes in Comamonas testosteroni T-2.</title>
        <authorList>
            <person name="Locher H.H."/>
            <person name="Malli C."/>
            <person name="Hooper S.W."/>
            <person name="Vorherr T."/>
            <person name="Leisinger T."/>
            <person name="Cook A.M."/>
        </authorList>
    </citation>
    <scope>FUNCTION</scope>
    <scope>SUBSTRATE SPECIFICITY</scope>
</reference>
<reference key="5">
    <citation type="journal article" date="1996" name="Microbiology">
        <title>Degradative pathways for p-toluenecarboxylate and p-toluenesulfonate and their multicomponent oxygenases in Comamonas testosteroni strains PSB-4 and T-2.</title>
        <authorList>
            <person name="Junker F."/>
            <person name="Saller E."/>
            <person name="Schlaefli Oppenberg H.R."/>
            <person name="Kroneck P.M."/>
            <person name="Leisinger T."/>
            <person name="Cook A.M."/>
        </authorList>
    </citation>
    <scope>FUNCTION</scope>
    <scope>CATALYTIC ACTIVITY</scope>
</reference>
<protein>
    <recommendedName>
        <fullName>4-formylbenzenesulfonate dehydrogenase TsaC1/TsaC2</fullName>
        <ecNumber>1.2.1.62</ecNumber>
    </recommendedName>
    <alternativeName>
        <fullName>Toluenesulfonate zinc-independent alcohol dehydrogenase TsaC</fullName>
    </alternativeName>
</protein>
<accession>P94681</accession>
<comment type="function">
    <text evidence="3 5">Involved in the toluene-4-sulfonate degradation pathway. Does not discriminate between the sulfonate and the carboxyl substituents and can also be involved in the p-toluenecarboxylate degradation pathway.</text>
</comment>
<comment type="catalytic activity">
    <reaction evidence="3">
        <text>4-formylbenzenesulfonate + NAD(+) + H2O = 4-sulfobenzoate + NADH + 2 H(+)</text>
        <dbReference type="Rhea" id="RHEA:18833"/>
        <dbReference type="ChEBI" id="CHEBI:11987"/>
        <dbReference type="ChEBI" id="CHEBI:15377"/>
        <dbReference type="ChEBI" id="CHEBI:15378"/>
        <dbReference type="ChEBI" id="CHEBI:20476"/>
        <dbReference type="ChEBI" id="CHEBI:57540"/>
        <dbReference type="ChEBI" id="CHEBI:57945"/>
        <dbReference type="EC" id="1.2.1.62"/>
    </reaction>
</comment>
<comment type="subunit">
    <text evidence="4">Homodimer.</text>
</comment>
<comment type="similarity">
    <text evidence="6">Belongs to the short-chain dehydrogenases/reductases (SDR) family.</text>
</comment>
<comment type="caution">
    <text evidence="7">TsaC2 is probably the product of a pseudogene and is not expressed, due to the absence of promoter-like sequences upstream of the operon tsaMBCD2.</text>
</comment>
<evidence type="ECO:0000250" key="1"/>
<evidence type="ECO:0000255" key="2">
    <source>
        <dbReference type="PROSITE-ProRule" id="PRU10001"/>
    </source>
</evidence>
<evidence type="ECO:0000269" key="3">
    <source>
    </source>
</evidence>
<evidence type="ECO:0000269" key="4">
    <source>
    </source>
</evidence>
<evidence type="ECO:0000269" key="5">
    <source ref="4"/>
</evidence>
<evidence type="ECO:0000305" key="6"/>
<evidence type="ECO:0000305" key="7">
    <source>
    </source>
</evidence>
<evidence type="ECO:0007829" key="8">
    <source>
        <dbReference type="PDB" id="8SY8"/>
    </source>
</evidence>
<feature type="chain" id="PRO_0000419116" description="4-formylbenzenesulfonate dehydrogenase TsaC1/TsaC2">
    <location>
        <begin position="1"/>
        <end position="252"/>
    </location>
</feature>
<feature type="active site" description="Proton acceptor" evidence="2">
    <location>
        <position position="155"/>
    </location>
</feature>
<feature type="binding site" evidence="1">
    <location>
        <begin position="9"/>
        <end position="36"/>
    </location>
    <ligand>
        <name>NAD(+)</name>
        <dbReference type="ChEBI" id="CHEBI:57540"/>
    </ligand>
</feature>
<feature type="binding site" evidence="1">
    <location>
        <position position="62"/>
    </location>
    <ligand>
        <name>NAD(+)</name>
        <dbReference type="ChEBI" id="CHEBI:57540"/>
    </ligand>
</feature>
<feature type="binding site" evidence="1">
    <location>
        <position position="142"/>
    </location>
    <ligand>
        <name>substrate</name>
    </ligand>
</feature>
<feature type="binding site" evidence="1">
    <location>
        <position position="159"/>
    </location>
    <ligand>
        <name>NAD(+)</name>
        <dbReference type="ChEBI" id="CHEBI:57540"/>
    </ligand>
</feature>
<feature type="strand" evidence="8">
    <location>
        <begin position="7"/>
        <end position="10"/>
    </location>
</feature>
<feature type="turn" evidence="8">
    <location>
        <begin position="11"/>
        <end position="14"/>
    </location>
</feature>
<feature type="helix" evidence="8">
    <location>
        <begin position="16"/>
        <end position="27"/>
    </location>
</feature>
<feature type="strand" evidence="8">
    <location>
        <begin position="31"/>
        <end position="37"/>
    </location>
</feature>
<feature type="helix" evidence="8">
    <location>
        <begin position="39"/>
        <end position="51"/>
    </location>
</feature>
<feature type="strand" evidence="8">
    <location>
        <begin position="56"/>
        <end position="60"/>
    </location>
</feature>
<feature type="helix" evidence="8">
    <location>
        <begin position="66"/>
        <end position="80"/>
    </location>
</feature>
<feature type="strand" evidence="8">
    <location>
        <begin position="85"/>
        <end position="89"/>
    </location>
</feature>
<feature type="helix" evidence="8">
    <location>
        <begin position="99"/>
        <end position="101"/>
    </location>
</feature>
<feature type="helix" evidence="8">
    <location>
        <begin position="104"/>
        <end position="114"/>
    </location>
</feature>
<feature type="helix" evidence="8">
    <location>
        <begin position="116"/>
        <end position="132"/>
    </location>
</feature>
<feature type="strand" evidence="8">
    <location>
        <begin position="135"/>
        <end position="140"/>
    </location>
</feature>
<feature type="helix" evidence="8">
    <location>
        <begin position="153"/>
        <end position="172"/>
    </location>
</feature>
<feature type="turn" evidence="8">
    <location>
        <begin position="173"/>
        <end position="177"/>
    </location>
</feature>
<feature type="strand" evidence="8">
    <location>
        <begin position="178"/>
        <end position="186"/>
    </location>
</feature>
<feature type="helix" evidence="8">
    <location>
        <begin position="222"/>
        <end position="232"/>
    </location>
</feature>
<feature type="helix" evidence="8">
    <location>
        <begin position="234"/>
        <end position="236"/>
    </location>
</feature>
<feature type="strand" evidence="8">
    <location>
        <begin position="243"/>
        <end position="247"/>
    </location>
</feature>
<proteinExistence type="evidence at protein level"/>